<feature type="chain" id="PRO_0000281194" description="Probable ABC transporter permease protein BruAb2_0483">
    <location>
        <begin position="1"/>
        <end position="289"/>
    </location>
</feature>
<feature type="transmembrane region" description="Helical" evidence="1">
    <location>
        <begin position="9"/>
        <end position="29"/>
    </location>
</feature>
<feature type="transmembrane region" description="Helical" evidence="1">
    <location>
        <begin position="70"/>
        <end position="90"/>
    </location>
</feature>
<feature type="transmembrane region" description="Helical" evidence="1">
    <location>
        <begin position="99"/>
        <end position="119"/>
    </location>
</feature>
<feature type="transmembrane region" description="Helical" evidence="1">
    <location>
        <begin position="144"/>
        <end position="166"/>
    </location>
</feature>
<feature type="transmembrane region" description="Helical" evidence="1">
    <location>
        <begin position="213"/>
        <end position="233"/>
    </location>
</feature>
<feature type="transmembrane region" description="Helical" evidence="1">
    <location>
        <begin position="258"/>
        <end position="278"/>
    </location>
</feature>
<feature type="domain" description="ABC transmembrane type-1" evidence="1">
    <location>
        <begin position="65"/>
        <end position="279"/>
    </location>
</feature>
<protein>
    <recommendedName>
        <fullName>Probable ABC transporter permease protein BruAb2_0483</fullName>
    </recommendedName>
</protein>
<dbReference type="EMBL" id="AE017224">
    <property type="protein sequence ID" value="AAX75905.1"/>
    <property type="molecule type" value="Genomic_DNA"/>
</dbReference>
<dbReference type="RefSeq" id="WP_002965895.1">
    <property type="nucleotide sequence ID" value="NC_006933.1"/>
</dbReference>
<dbReference type="SMR" id="Q578M9"/>
<dbReference type="EnsemblBacteria" id="AAX75905">
    <property type="protein sequence ID" value="AAX75905"/>
    <property type="gene ID" value="BruAb2_0483"/>
</dbReference>
<dbReference type="KEGG" id="bmb:BruAb2_0483"/>
<dbReference type="HOGENOM" id="CLU_016047_0_3_5"/>
<dbReference type="Proteomes" id="UP000000540">
    <property type="component" value="Chromosome II"/>
</dbReference>
<dbReference type="GO" id="GO:0005886">
    <property type="term" value="C:plasma membrane"/>
    <property type="evidence" value="ECO:0007669"/>
    <property type="project" value="UniProtKB-SubCell"/>
</dbReference>
<dbReference type="GO" id="GO:0055085">
    <property type="term" value="P:transmembrane transport"/>
    <property type="evidence" value="ECO:0007669"/>
    <property type="project" value="InterPro"/>
</dbReference>
<dbReference type="CDD" id="cd06261">
    <property type="entry name" value="TM_PBP2"/>
    <property type="match status" value="1"/>
</dbReference>
<dbReference type="Gene3D" id="1.10.3720.10">
    <property type="entry name" value="MetI-like"/>
    <property type="match status" value="1"/>
</dbReference>
<dbReference type="InterPro" id="IPR000515">
    <property type="entry name" value="MetI-like"/>
</dbReference>
<dbReference type="InterPro" id="IPR035906">
    <property type="entry name" value="MetI-like_sf"/>
</dbReference>
<dbReference type="PANTHER" id="PTHR43005">
    <property type="entry name" value="BLR7065 PROTEIN"/>
    <property type="match status" value="1"/>
</dbReference>
<dbReference type="PANTHER" id="PTHR43005:SF1">
    <property type="entry name" value="SPERMIDINE_PUTRESCINE TRANSPORT SYSTEM PERMEASE PROTEIN"/>
    <property type="match status" value="1"/>
</dbReference>
<dbReference type="Pfam" id="PF00528">
    <property type="entry name" value="BPD_transp_1"/>
    <property type="match status" value="1"/>
</dbReference>
<dbReference type="SUPFAM" id="SSF161098">
    <property type="entry name" value="MetI-like"/>
    <property type="match status" value="1"/>
</dbReference>
<dbReference type="PROSITE" id="PS50928">
    <property type="entry name" value="ABC_TM1"/>
    <property type="match status" value="1"/>
</dbReference>
<name>Y2783_BRUAB</name>
<gene>
    <name type="ordered locus">BruAb2_0483</name>
</gene>
<organism>
    <name type="scientific">Brucella abortus biovar 1 (strain 9-941)</name>
    <dbReference type="NCBI Taxonomy" id="262698"/>
    <lineage>
        <taxon>Bacteria</taxon>
        <taxon>Pseudomonadati</taxon>
        <taxon>Pseudomonadota</taxon>
        <taxon>Alphaproteobacteria</taxon>
        <taxon>Hyphomicrobiales</taxon>
        <taxon>Brucellaceae</taxon>
        <taxon>Brucella/Ochrobactrum group</taxon>
        <taxon>Brucella</taxon>
    </lineage>
</organism>
<accession>Q578M9</accession>
<reference key="1">
    <citation type="journal article" date="2005" name="J. Bacteriol.">
        <title>Completion of the genome sequence of Brucella abortus and comparison to the highly similar genomes of Brucella melitensis and Brucella suis.</title>
        <authorList>
            <person name="Halling S.M."/>
            <person name="Peterson-Burch B.D."/>
            <person name="Bricker B.J."/>
            <person name="Zuerner R.L."/>
            <person name="Qing Z."/>
            <person name="Li L.-L."/>
            <person name="Kapur V."/>
            <person name="Alt D.P."/>
            <person name="Olsen S.C."/>
        </authorList>
    </citation>
    <scope>NUCLEOTIDE SEQUENCE [LARGE SCALE GENOMIC DNA]</scope>
    <source>
        <strain>9-941</strain>
    </source>
</reference>
<comment type="function">
    <text evidence="2">Probably part of an ABC transporter complex. Probably responsible for the translocation of the substrate across the membrane (Probable).</text>
</comment>
<comment type="subunit">
    <text evidence="2">The complex is composed of two ATP-binding proteins (BruAb2_0487), two transmembrane proteins (BruAb2_0483) and a solute-binding protein (BruAb2_0484).</text>
</comment>
<comment type="subcellular location">
    <subcellularLocation>
        <location evidence="2">Cell inner membrane</location>
        <topology evidence="1">Multi-pass membrane protein</topology>
    </subcellularLocation>
</comment>
<comment type="similarity">
    <text evidence="2">Belongs to the binding-protein-dependent transport system permease family.</text>
</comment>
<proteinExistence type="inferred from homology"/>
<sequence length="289" mass="32092">MQNRTLPYFLILPSLLLAAVVIFWPVVHLFEIATHDVNRFGQLREFNDGANFTALFATAEFMNALWRTAVWTVAVVGGALVLSIPVAIILNMDFYGRSVARVIIMLPWAVSLTMTAIFWRWALNGESGMLNSALHGLGLIDTNIQWLASAATAFPMQILVGILVTVPFTTTIFLGGLSSIPDDLYEASSLEGASLWQQFREITFPLLKPFVNIAIVLNTIYVFNSFPIIWVMTQGRPANSTDILVTHLYKLAFRLGKFGEASAVSLIMLAILLVFTVIYIRISTRSEQS</sequence>
<evidence type="ECO:0000255" key="1">
    <source>
        <dbReference type="PROSITE-ProRule" id="PRU00441"/>
    </source>
</evidence>
<evidence type="ECO:0000305" key="2"/>
<keyword id="KW-0997">Cell inner membrane</keyword>
<keyword id="KW-1003">Cell membrane</keyword>
<keyword id="KW-0472">Membrane</keyword>
<keyword id="KW-0812">Transmembrane</keyword>
<keyword id="KW-1133">Transmembrane helix</keyword>
<keyword id="KW-0813">Transport</keyword>